<comment type="similarity">
    <text evidence="1">Belongs to the bacterial ribosomal protein bL34 family.</text>
</comment>
<protein>
    <recommendedName>
        <fullName evidence="1">Large ribosomal subunit protein bL34</fullName>
    </recommendedName>
    <alternativeName>
        <fullName evidence="3">50S ribosomal protein L34</fullName>
    </alternativeName>
</protein>
<name>RL34_LIMRD</name>
<reference key="1">
    <citation type="journal article" date="2011" name="PLoS Genet.">
        <title>The evolution of host specialization in the vertebrate gut symbiont Lactobacillus reuteri.</title>
        <authorList>
            <person name="Frese S.A."/>
            <person name="Benson A.K."/>
            <person name="Tannock G.W."/>
            <person name="Loach D.M."/>
            <person name="Kim J."/>
            <person name="Zhang M."/>
            <person name="Oh P.L."/>
            <person name="Heng N.C."/>
            <person name="Patil P.B."/>
            <person name="Juge N."/>
            <person name="Mackenzie D.A."/>
            <person name="Pearson B.M."/>
            <person name="Lapidus A."/>
            <person name="Dalin E."/>
            <person name="Tice H."/>
            <person name="Goltsman E."/>
            <person name="Land M."/>
            <person name="Hauser L."/>
            <person name="Ivanova N."/>
            <person name="Kyrpides N.C."/>
            <person name="Walter J."/>
        </authorList>
    </citation>
    <scope>NUCLEOTIDE SEQUENCE [LARGE SCALE GENOMIC DNA]</scope>
    <source>
        <strain>DSM 20016</strain>
    </source>
</reference>
<accession>A5VMV2</accession>
<dbReference type="EMBL" id="CP000705">
    <property type="protein sequence ID" value="ABQ84176.1"/>
    <property type="molecule type" value="Genomic_DNA"/>
</dbReference>
<dbReference type="RefSeq" id="WP_003665227.1">
    <property type="nucleotide sequence ID" value="NZ_AZDD01000016.1"/>
</dbReference>
<dbReference type="SMR" id="A5VMV2"/>
<dbReference type="STRING" id="557436.Lreu_1944"/>
<dbReference type="GeneID" id="78174659"/>
<dbReference type="KEGG" id="lre:Lreu_1944"/>
<dbReference type="PATRIC" id="fig|557436.17.peg.509"/>
<dbReference type="eggNOG" id="COG0230">
    <property type="taxonomic scope" value="Bacteria"/>
</dbReference>
<dbReference type="HOGENOM" id="CLU_129938_2_0_9"/>
<dbReference type="Proteomes" id="UP000001991">
    <property type="component" value="Chromosome"/>
</dbReference>
<dbReference type="GO" id="GO:1990904">
    <property type="term" value="C:ribonucleoprotein complex"/>
    <property type="evidence" value="ECO:0007669"/>
    <property type="project" value="UniProtKB-KW"/>
</dbReference>
<dbReference type="GO" id="GO:0005840">
    <property type="term" value="C:ribosome"/>
    <property type="evidence" value="ECO:0007669"/>
    <property type="project" value="UniProtKB-KW"/>
</dbReference>
<dbReference type="GO" id="GO:0003735">
    <property type="term" value="F:structural constituent of ribosome"/>
    <property type="evidence" value="ECO:0007669"/>
    <property type="project" value="InterPro"/>
</dbReference>
<dbReference type="GO" id="GO:0006412">
    <property type="term" value="P:translation"/>
    <property type="evidence" value="ECO:0007669"/>
    <property type="project" value="UniProtKB-UniRule"/>
</dbReference>
<dbReference type="FunFam" id="1.10.287.3980:FF:000001">
    <property type="entry name" value="Mitochondrial ribosomal protein L34"/>
    <property type="match status" value="1"/>
</dbReference>
<dbReference type="Gene3D" id="1.10.287.3980">
    <property type="match status" value="1"/>
</dbReference>
<dbReference type="HAMAP" id="MF_00391">
    <property type="entry name" value="Ribosomal_bL34"/>
    <property type="match status" value="1"/>
</dbReference>
<dbReference type="InterPro" id="IPR000271">
    <property type="entry name" value="Ribosomal_bL34"/>
</dbReference>
<dbReference type="InterPro" id="IPR020939">
    <property type="entry name" value="Ribosomal_bL34_CS"/>
</dbReference>
<dbReference type="NCBIfam" id="TIGR01030">
    <property type="entry name" value="rpmH_bact"/>
    <property type="match status" value="1"/>
</dbReference>
<dbReference type="PANTHER" id="PTHR14503:SF4">
    <property type="entry name" value="LARGE RIBOSOMAL SUBUNIT PROTEIN BL34M"/>
    <property type="match status" value="1"/>
</dbReference>
<dbReference type="PANTHER" id="PTHR14503">
    <property type="entry name" value="MITOCHONDRIAL RIBOSOMAL PROTEIN 34 FAMILY MEMBER"/>
    <property type="match status" value="1"/>
</dbReference>
<dbReference type="Pfam" id="PF00468">
    <property type="entry name" value="Ribosomal_L34"/>
    <property type="match status" value="1"/>
</dbReference>
<dbReference type="PROSITE" id="PS00784">
    <property type="entry name" value="RIBOSOMAL_L34"/>
    <property type="match status" value="1"/>
</dbReference>
<organism>
    <name type="scientific">Limosilactobacillus reuteri (strain DSM 20016)</name>
    <name type="common">Lactobacillus reuteri</name>
    <dbReference type="NCBI Taxonomy" id="557436"/>
    <lineage>
        <taxon>Bacteria</taxon>
        <taxon>Bacillati</taxon>
        <taxon>Bacillota</taxon>
        <taxon>Bacilli</taxon>
        <taxon>Lactobacillales</taxon>
        <taxon>Lactobacillaceae</taxon>
        <taxon>Limosilactobacillus</taxon>
    </lineage>
</organism>
<gene>
    <name evidence="1" type="primary">rpmH</name>
    <name type="ordered locus">Lreu_1944</name>
</gene>
<feature type="chain" id="PRO_1000060758" description="Large ribosomal subunit protein bL34">
    <location>
        <begin position="1"/>
        <end position="44"/>
    </location>
</feature>
<feature type="region of interest" description="Disordered" evidence="2">
    <location>
        <begin position="1"/>
        <end position="44"/>
    </location>
</feature>
<feature type="compositionally biased region" description="Basic residues" evidence="2">
    <location>
        <begin position="1"/>
        <end position="22"/>
    </location>
</feature>
<feature type="compositionally biased region" description="Basic residues" evidence="2">
    <location>
        <begin position="30"/>
        <end position="44"/>
    </location>
</feature>
<evidence type="ECO:0000255" key="1">
    <source>
        <dbReference type="HAMAP-Rule" id="MF_00391"/>
    </source>
</evidence>
<evidence type="ECO:0000256" key="2">
    <source>
        <dbReference type="SAM" id="MobiDB-lite"/>
    </source>
</evidence>
<evidence type="ECO:0000305" key="3"/>
<proteinExistence type="inferred from homology"/>
<keyword id="KW-1185">Reference proteome</keyword>
<keyword id="KW-0687">Ribonucleoprotein</keyword>
<keyword id="KW-0689">Ribosomal protein</keyword>
<sequence>MKRTFQPKKRHRARVHGFRKRMSTSNGRKVLARRRQKGRKVLSA</sequence>